<sequence length="296" mass="34049">MTPETNNDETLSRPKPRAALPPVPEGMSKSQWKKQWKKEQFELNKPLYAKIRKEKKQKAREQRRERLQKALEENGGEIPEELRRTPRVNVNQKDSGIKVIIDCAFDELMNEKEIVSLSTQITRAYSANKRENHFADVKVTSFNKRLKERFDCGLKGANYDAWKHFEFTDESALPTTNAVYLTADTDETLETLEPGTTYIVGGIVDKNRHKALCYNKAKELGIPTRRLPIGEYIKLCGRKVLTTTHVIQIMLRYFDNHDWKEAFESVLPARKLAELADHAQESNSSSPAEEQDAQDI</sequence>
<accession>Q75A17</accession>
<feature type="chain" id="PRO_0000060509" description="tRNA (guanine(9)-N1)-methyltransferase">
    <location>
        <begin position="1"/>
        <end position="296"/>
    </location>
</feature>
<feature type="domain" description="SAM-dependent MTase TRM10-type" evidence="3">
    <location>
        <begin position="85"/>
        <end position="274"/>
    </location>
</feature>
<feature type="region of interest" description="Disordered" evidence="4">
    <location>
        <begin position="1"/>
        <end position="33"/>
    </location>
</feature>
<feature type="region of interest" description="Disordered" evidence="4">
    <location>
        <begin position="277"/>
        <end position="296"/>
    </location>
</feature>
<feature type="active site" description="Proton acceptor" evidence="1">
    <location>
        <position position="205"/>
    </location>
</feature>
<feature type="binding site" evidence="2">
    <location>
        <begin position="181"/>
        <end position="182"/>
    </location>
    <ligand>
        <name>S-adenosyl-L-methionine</name>
        <dbReference type="ChEBI" id="CHEBI:59789"/>
    </ligand>
</feature>
<feature type="binding site" evidence="2">
    <location>
        <position position="201"/>
    </location>
    <ligand>
        <name>S-adenosyl-L-methionine</name>
        <dbReference type="ChEBI" id="CHEBI:59789"/>
    </ligand>
</feature>
<feature type="binding site" evidence="2">
    <location>
        <begin position="205"/>
        <end position="209"/>
    </location>
    <ligand>
        <name>S-adenosyl-L-methionine</name>
        <dbReference type="ChEBI" id="CHEBI:59789"/>
    </ligand>
</feature>
<feature type="binding site" evidence="2">
    <location>
        <position position="213"/>
    </location>
    <ligand>
        <name>S-adenosyl-L-methionine</name>
        <dbReference type="ChEBI" id="CHEBI:59789"/>
    </ligand>
</feature>
<feature type="binding site" evidence="2">
    <location>
        <position position="227"/>
    </location>
    <ligand>
        <name>S-adenosyl-L-methionine</name>
        <dbReference type="ChEBI" id="CHEBI:59789"/>
    </ligand>
</feature>
<feature type="binding site" evidence="2">
    <location>
        <begin position="239"/>
        <end position="241"/>
    </location>
    <ligand>
        <name>S-adenosyl-L-methionine</name>
        <dbReference type="ChEBI" id="CHEBI:59789"/>
    </ligand>
</feature>
<gene>
    <name evidence="2" type="primary">TRM10</name>
    <name type="ordered locus">ADR110C</name>
</gene>
<protein>
    <recommendedName>
        <fullName evidence="2">tRNA (guanine(9)-N1)-methyltransferase</fullName>
        <ecNumber evidence="2">2.1.1.221</ecNumber>
    </recommendedName>
    <alternativeName>
        <fullName evidence="2">tRNA methyltransferase 10</fullName>
    </alternativeName>
    <alternativeName>
        <fullName evidence="2">tRNA(m1G9)-methyltransferase</fullName>
        <shortName evidence="2">tRNA(m1G9)MTase</shortName>
    </alternativeName>
</protein>
<evidence type="ECO:0000250" key="1">
    <source>
        <dbReference type="UniProtKB" id="O14214"/>
    </source>
</evidence>
<evidence type="ECO:0000250" key="2">
    <source>
        <dbReference type="UniProtKB" id="Q12400"/>
    </source>
</evidence>
<evidence type="ECO:0000255" key="3">
    <source>
        <dbReference type="PROSITE-ProRule" id="PRU01012"/>
    </source>
</evidence>
<evidence type="ECO:0000256" key="4">
    <source>
        <dbReference type="SAM" id="MobiDB-lite"/>
    </source>
</evidence>
<reference key="1">
    <citation type="journal article" date="2004" name="Science">
        <title>The Ashbya gossypii genome as a tool for mapping the ancient Saccharomyces cerevisiae genome.</title>
        <authorList>
            <person name="Dietrich F.S."/>
            <person name="Voegeli S."/>
            <person name="Brachat S."/>
            <person name="Lerch A."/>
            <person name="Gates K."/>
            <person name="Steiner S."/>
            <person name="Mohr C."/>
            <person name="Poehlmann R."/>
            <person name="Luedi P."/>
            <person name="Choi S."/>
            <person name="Wing R.A."/>
            <person name="Flavier A."/>
            <person name="Gaffney T.D."/>
            <person name="Philippsen P."/>
        </authorList>
    </citation>
    <scope>NUCLEOTIDE SEQUENCE [LARGE SCALE GENOMIC DNA]</scope>
    <source>
        <strain>ATCC 10895 / CBS 109.51 / FGSC 9923 / NRRL Y-1056</strain>
    </source>
</reference>
<reference key="2">
    <citation type="journal article" date="2013" name="G3 (Bethesda)">
        <title>Genomes of Ashbya fungi isolated from insects reveal four mating-type loci, numerous translocations, lack of transposons, and distinct gene duplications.</title>
        <authorList>
            <person name="Dietrich F.S."/>
            <person name="Voegeli S."/>
            <person name="Kuo S."/>
            <person name="Philippsen P."/>
        </authorList>
    </citation>
    <scope>GENOME REANNOTATION</scope>
    <source>
        <strain>ATCC 10895 / CBS 109.51 / FGSC 9923 / NRRL Y-1056</strain>
    </source>
</reference>
<keyword id="KW-0963">Cytoplasm</keyword>
<keyword id="KW-0489">Methyltransferase</keyword>
<keyword id="KW-0539">Nucleus</keyword>
<keyword id="KW-1185">Reference proteome</keyword>
<keyword id="KW-0949">S-adenosyl-L-methionine</keyword>
<keyword id="KW-0808">Transferase</keyword>
<keyword id="KW-0819">tRNA processing</keyword>
<name>TRM10_EREGS</name>
<dbReference type="EC" id="2.1.1.221" evidence="2"/>
<dbReference type="EMBL" id="AE016817">
    <property type="protein sequence ID" value="AAS52030.1"/>
    <property type="molecule type" value="Genomic_DNA"/>
</dbReference>
<dbReference type="RefSeq" id="NP_984206.1">
    <property type="nucleotide sequence ID" value="NM_209559.1"/>
</dbReference>
<dbReference type="SMR" id="Q75A17"/>
<dbReference type="FunCoup" id="Q75A17">
    <property type="interactions" value="811"/>
</dbReference>
<dbReference type="STRING" id="284811.Q75A17"/>
<dbReference type="EnsemblFungi" id="AAS52030">
    <property type="protein sequence ID" value="AAS52030"/>
    <property type="gene ID" value="AGOS_ADR110C"/>
</dbReference>
<dbReference type="GeneID" id="4620377"/>
<dbReference type="KEGG" id="ago:AGOS_ADR110C"/>
<dbReference type="eggNOG" id="KOG2967">
    <property type="taxonomic scope" value="Eukaryota"/>
</dbReference>
<dbReference type="HOGENOM" id="CLU_034384_1_0_1"/>
<dbReference type="InParanoid" id="Q75A17"/>
<dbReference type="OMA" id="FKKNDGW"/>
<dbReference type="OrthoDB" id="278300at2759"/>
<dbReference type="Proteomes" id="UP000000591">
    <property type="component" value="Chromosome IV"/>
</dbReference>
<dbReference type="GO" id="GO:0005737">
    <property type="term" value="C:cytoplasm"/>
    <property type="evidence" value="ECO:0007669"/>
    <property type="project" value="UniProtKB-SubCell"/>
</dbReference>
<dbReference type="GO" id="GO:0005634">
    <property type="term" value="C:nucleus"/>
    <property type="evidence" value="ECO:0000318"/>
    <property type="project" value="GO_Central"/>
</dbReference>
<dbReference type="GO" id="GO:0052905">
    <property type="term" value="F:tRNA (guanosine(9)-N1)-methyltransferase activity"/>
    <property type="evidence" value="ECO:0007669"/>
    <property type="project" value="UniProtKB-EC"/>
</dbReference>
<dbReference type="GO" id="GO:0000049">
    <property type="term" value="F:tRNA binding"/>
    <property type="evidence" value="ECO:0000318"/>
    <property type="project" value="GO_Central"/>
</dbReference>
<dbReference type="GO" id="GO:0002939">
    <property type="term" value="P:tRNA N1-guanine methylation"/>
    <property type="evidence" value="ECO:0000318"/>
    <property type="project" value="GO_Central"/>
</dbReference>
<dbReference type="CDD" id="cd18089">
    <property type="entry name" value="SPOUT_Trm10-like"/>
    <property type="match status" value="1"/>
</dbReference>
<dbReference type="Gene3D" id="3.40.1280.30">
    <property type="match status" value="1"/>
</dbReference>
<dbReference type="InterPro" id="IPR028564">
    <property type="entry name" value="MT_TRM10-typ"/>
</dbReference>
<dbReference type="InterPro" id="IPR038459">
    <property type="entry name" value="MT_TRM10-typ_sf"/>
</dbReference>
<dbReference type="InterPro" id="IPR016653">
    <property type="entry name" value="TRM10/TRM10A"/>
</dbReference>
<dbReference type="InterPro" id="IPR007356">
    <property type="entry name" value="tRNA_m1G_MeTrfase_euk"/>
</dbReference>
<dbReference type="InterPro" id="IPR016009">
    <property type="entry name" value="tRNA_MeTrfase_TRMD/TRM10"/>
</dbReference>
<dbReference type="PANTHER" id="PTHR13563">
    <property type="entry name" value="TRNA (GUANINE-9-) METHYLTRANSFERASE"/>
    <property type="match status" value="1"/>
</dbReference>
<dbReference type="PANTHER" id="PTHR13563:SF13">
    <property type="entry name" value="TRNA METHYLTRANSFERASE 10 HOMOLOG A"/>
    <property type="match status" value="1"/>
</dbReference>
<dbReference type="Pfam" id="PF01746">
    <property type="entry name" value="tRNA_m1G_MT"/>
    <property type="match status" value="1"/>
</dbReference>
<dbReference type="PIRSF" id="PIRSF016323">
    <property type="entry name" value="tRNA_m1G_mtfrase_met"/>
    <property type="match status" value="1"/>
</dbReference>
<dbReference type="PROSITE" id="PS51675">
    <property type="entry name" value="SAM_MT_TRM10"/>
    <property type="match status" value="1"/>
</dbReference>
<proteinExistence type="inferred from homology"/>
<comment type="function">
    <text evidence="2">S-adenosyl-L-methionine-dependent guanine N(1)-methyltransferase that catalyzes the formation of N(1)-methylguanine at position 9 (m1G9) in cytoplasmic tRNA.</text>
</comment>
<comment type="catalytic activity">
    <reaction evidence="2">
        <text>guanosine(9) in tRNA + S-adenosyl-L-methionine = N(1)-methylguanosine(9) in tRNA + S-adenosyl-L-homocysteine + H(+)</text>
        <dbReference type="Rhea" id="RHEA:43156"/>
        <dbReference type="Rhea" id="RHEA-COMP:10367"/>
        <dbReference type="Rhea" id="RHEA-COMP:10368"/>
        <dbReference type="ChEBI" id="CHEBI:15378"/>
        <dbReference type="ChEBI" id="CHEBI:57856"/>
        <dbReference type="ChEBI" id="CHEBI:59789"/>
        <dbReference type="ChEBI" id="CHEBI:73542"/>
        <dbReference type="ChEBI" id="CHEBI:74269"/>
        <dbReference type="EC" id="2.1.1.221"/>
    </reaction>
</comment>
<comment type="subunit">
    <text evidence="1">Monomer.</text>
</comment>
<comment type="subcellular location">
    <subcellularLocation>
        <location evidence="2">Cytoplasm</location>
    </subcellularLocation>
    <subcellularLocation>
        <location evidence="2">Nucleus</location>
    </subcellularLocation>
</comment>
<comment type="similarity">
    <text evidence="3">Belongs to the class IV-like SAM-binding methyltransferase superfamily. TRM10 family.</text>
</comment>
<organism>
    <name type="scientific">Eremothecium gossypii (strain ATCC 10895 / CBS 109.51 / FGSC 9923 / NRRL Y-1056)</name>
    <name type="common">Yeast</name>
    <name type="synonym">Ashbya gossypii</name>
    <dbReference type="NCBI Taxonomy" id="284811"/>
    <lineage>
        <taxon>Eukaryota</taxon>
        <taxon>Fungi</taxon>
        <taxon>Dikarya</taxon>
        <taxon>Ascomycota</taxon>
        <taxon>Saccharomycotina</taxon>
        <taxon>Saccharomycetes</taxon>
        <taxon>Saccharomycetales</taxon>
        <taxon>Saccharomycetaceae</taxon>
        <taxon>Eremothecium</taxon>
    </lineage>
</organism>